<protein>
    <recommendedName>
        <fullName evidence="7">Regulatory protein MgsR</fullName>
    </recommendedName>
    <alternativeName>
        <fullName evidence="6">Modulator of the general stress response</fullName>
    </alternativeName>
</protein>
<reference key="1">
    <citation type="journal article" date="1996" name="Microbiology">
        <title>Systematic sequencing of the 283 kb 210 degrees-232 degrees region of the Bacillus subtilis genome containing the skin element and many sporulation genes.</title>
        <authorList>
            <person name="Mizuno M."/>
            <person name="Masuda S."/>
            <person name="Takemaru K."/>
            <person name="Hosono S."/>
            <person name="Sato T."/>
            <person name="Takeuchi M."/>
            <person name="Kobayashi Y."/>
        </authorList>
    </citation>
    <scope>NUCLEOTIDE SEQUENCE [GENOMIC DNA]</scope>
    <source>
        <strain>168 / JH642</strain>
    </source>
</reference>
<reference key="2">
    <citation type="journal article" date="1997" name="Nature">
        <title>The complete genome sequence of the Gram-positive bacterium Bacillus subtilis.</title>
        <authorList>
            <person name="Kunst F."/>
            <person name="Ogasawara N."/>
            <person name="Moszer I."/>
            <person name="Albertini A.M."/>
            <person name="Alloni G."/>
            <person name="Azevedo V."/>
            <person name="Bertero M.G."/>
            <person name="Bessieres P."/>
            <person name="Bolotin A."/>
            <person name="Borchert S."/>
            <person name="Borriss R."/>
            <person name="Boursier L."/>
            <person name="Brans A."/>
            <person name="Braun M."/>
            <person name="Brignell S.C."/>
            <person name="Bron S."/>
            <person name="Brouillet S."/>
            <person name="Bruschi C.V."/>
            <person name="Caldwell B."/>
            <person name="Capuano V."/>
            <person name="Carter N.M."/>
            <person name="Choi S.-K."/>
            <person name="Codani J.-J."/>
            <person name="Connerton I.F."/>
            <person name="Cummings N.J."/>
            <person name="Daniel R.A."/>
            <person name="Denizot F."/>
            <person name="Devine K.M."/>
            <person name="Duesterhoeft A."/>
            <person name="Ehrlich S.D."/>
            <person name="Emmerson P.T."/>
            <person name="Entian K.-D."/>
            <person name="Errington J."/>
            <person name="Fabret C."/>
            <person name="Ferrari E."/>
            <person name="Foulger D."/>
            <person name="Fritz C."/>
            <person name="Fujita M."/>
            <person name="Fujita Y."/>
            <person name="Fuma S."/>
            <person name="Galizzi A."/>
            <person name="Galleron N."/>
            <person name="Ghim S.-Y."/>
            <person name="Glaser P."/>
            <person name="Goffeau A."/>
            <person name="Golightly E.J."/>
            <person name="Grandi G."/>
            <person name="Guiseppi G."/>
            <person name="Guy B.J."/>
            <person name="Haga K."/>
            <person name="Haiech J."/>
            <person name="Harwood C.R."/>
            <person name="Henaut A."/>
            <person name="Hilbert H."/>
            <person name="Holsappel S."/>
            <person name="Hosono S."/>
            <person name="Hullo M.-F."/>
            <person name="Itaya M."/>
            <person name="Jones L.-M."/>
            <person name="Joris B."/>
            <person name="Karamata D."/>
            <person name="Kasahara Y."/>
            <person name="Klaerr-Blanchard M."/>
            <person name="Klein C."/>
            <person name="Kobayashi Y."/>
            <person name="Koetter P."/>
            <person name="Koningstein G."/>
            <person name="Krogh S."/>
            <person name="Kumano M."/>
            <person name="Kurita K."/>
            <person name="Lapidus A."/>
            <person name="Lardinois S."/>
            <person name="Lauber J."/>
            <person name="Lazarevic V."/>
            <person name="Lee S.-M."/>
            <person name="Levine A."/>
            <person name="Liu H."/>
            <person name="Masuda S."/>
            <person name="Mauel C."/>
            <person name="Medigue C."/>
            <person name="Medina N."/>
            <person name="Mellado R.P."/>
            <person name="Mizuno M."/>
            <person name="Moestl D."/>
            <person name="Nakai S."/>
            <person name="Noback M."/>
            <person name="Noone D."/>
            <person name="O'Reilly M."/>
            <person name="Ogawa K."/>
            <person name="Ogiwara A."/>
            <person name="Oudega B."/>
            <person name="Park S.-H."/>
            <person name="Parro V."/>
            <person name="Pohl T.M."/>
            <person name="Portetelle D."/>
            <person name="Porwollik S."/>
            <person name="Prescott A.M."/>
            <person name="Presecan E."/>
            <person name="Pujic P."/>
            <person name="Purnelle B."/>
            <person name="Rapoport G."/>
            <person name="Rey M."/>
            <person name="Reynolds S."/>
            <person name="Rieger M."/>
            <person name="Rivolta C."/>
            <person name="Rocha E."/>
            <person name="Roche B."/>
            <person name="Rose M."/>
            <person name="Sadaie Y."/>
            <person name="Sato T."/>
            <person name="Scanlan E."/>
            <person name="Schleich S."/>
            <person name="Schroeter R."/>
            <person name="Scoffone F."/>
            <person name="Sekiguchi J."/>
            <person name="Sekowska A."/>
            <person name="Seror S.J."/>
            <person name="Serror P."/>
            <person name="Shin B.-S."/>
            <person name="Soldo B."/>
            <person name="Sorokin A."/>
            <person name="Tacconi E."/>
            <person name="Takagi T."/>
            <person name="Takahashi H."/>
            <person name="Takemaru K."/>
            <person name="Takeuchi M."/>
            <person name="Tamakoshi A."/>
            <person name="Tanaka T."/>
            <person name="Terpstra P."/>
            <person name="Tognoni A."/>
            <person name="Tosato V."/>
            <person name="Uchiyama S."/>
            <person name="Vandenbol M."/>
            <person name="Vannier F."/>
            <person name="Vassarotti A."/>
            <person name="Viari A."/>
            <person name="Wambutt R."/>
            <person name="Wedler E."/>
            <person name="Wedler H."/>
            <person name="Weitzenegger T."/>
            <person name="Winters P."/>
            <person name="Wipat A."/>
            <person name="Yamamoto H."/>
            <person name="Yamane K."/>
            <person name="Yasumoto K."/>
            <person name="Yata K."/>
            <person name="Yoshida K."/>
            <person name="Yoshikawa H.-F."/>
            <person name="Zumstein E."/>
            <person name="Yoshikawa H."/>
            <person name="Danchin A."/>
        </authorList>
    </citation>
    <scope>NUCLEOTIDE SEQUENCE [LARGE SCALE GENOMIC DNA]</scope>
    <source>
        <strain>168</strain>
    </source>
</reference>
<reference key="3">
    <citation type="journal article" date="2009" name="Microbiology">
        <title>From a consortium sequence to a unified sequence: the Bacillus subtilis 168 reference genome a decade later.</title>
        <authorList>
            <person name="Barbe V."/>
            <person name="Cruveiller S."/>
            <person name="Kunst F."/>
            <person name="Lenoble P."/>
            <person name="Meurice G."/>
            <person name="Sekowska A."/>
            <person name="Vallenet D."/>
            <person name="Wang T."/>
            <person name="Moszer I."/>
            <person name="Medigue C."/>
            <person name="Danchin A."/>
        </authorList>
    </citation>
    <scope>SEQUENCE REVISION TO 77</scope>
</reference>
<reference key="4">
    <citation type="journal article" date="2001" name="J. Bacteriol.">
        <title>Global analysis of the general stress response of Bacillus subtilis.</title>
        <authorList>
            <person name="Petersohn A."/>
            <person name="Brigulla M."/>
            <person name="Haas S."/>
            <person name="Hoheisel J.D."/>
            <person name="Voelker U."/>
            <person name="Hecker M."/>
        </authorList>
    </citation>
    <scope>INDUCTION</scope>
</reference>
<reference key="5">
    <citation type="journal article" date="2008" name="Mol. Microbiol.">
        <title>The Spx paralogue MgsR (YqgZ) controls a subregulon within the general stress response of Bacillus subtilis.</title>
        <authorList>
            <person name="Reder A."/>
            <person name="Hoper D."/>
            <person name="Weinberg C."/>
            <person name="Gerth U."/>
            <person name="Fraunholz M."/>
            <person name="Hecker M."/>
        </authorList>
    </citation>
    <scope>FUNCTION</scope>
    <scope>INDUCTION</scope>
    <scope>DISRUPTION PHENOTYPE</scope>
    <scope>MUTAGENESIS OF CYS-13 AND GLY-55</scope>
    <scope>GENE NAME</scope>
</reference>
<reference key="6">
    <citation type="journal article" date="2012" name="Environ. Microbiol.">
        <title>The modulator of the general stress response, MgsR, of Bacillus subtilis is subject to multiple and complex control mechanisms.</title>
        <authorList>
            <person name="Reder A."/>
            <person name="Poether D.C."/>
            <person name="Gerth U."/>
            <person name="Hecker M."/>
        </authorList>
    </citation>
    <scope>ACTIVITY REGULATION</scope>
    <scope>INDUCTION</scope>
    <scope>DISULFIDE BOND</scope>
    <scope>MUTAGENESIS OF CYS-13 AND GLY-55</scope>
</reference>
<reference key="7">
    <citation type="journal article" date="2020" name="Front. Microbiol.">
        <title>The involvement of the McsB arginine kinase in Clp-dependent degradation of the MgsR regulator in Bacillus subtilis.</title>
        <authorList>
            <person name="Lilge L."/>
            <person name="Reder A."/>
            <person name="Tippmann F."/>
            <person name="Morgenroth F."/>
            <person name="Grohmann J."/>
            <person name="Becher D."/>
            <person name="Riedel K."/>
            <person name="Voelker U."/>
            <person name="Hecker M."/>
            <person name="Gerth U."/>
        </authorList>
    </citation>
    <scope>ACTIVITY REGULATION</scope>
    <scope>MUTAGENESIS OF ARG-17; ARG-33; ARG-37; ARG-42; ARG-63 AND 94-ARG-ARG-95</scope>
</reference>
<feature type="chain" id="PRO_0000162583" description="Regulatory protein MgsR">
    <location>
        <begin position="1"/>
        <end position="126"/>
    </location>
</feature>
<feature type="disulfide bond" description="Redox-active" evidence="1 4">
    <location>
        <begin position="13"/>
        <end position="16"/>
    </location>
</feature>
<feature type="mutagenesis site" description="Loss of activity. Strongly diminishes expression of mgsR and of the MgsR regulon." evidence="3 4">
    <original>C</original>
    <variation>S</variation>
    <location>
        <position position="13"/>
    </location>
</feature>
<feature type="mutagenesis site" description="Destabilizes MgsR approximately by half. Almost loss of activity." evidence="5">
    <original>R</original>
    <variation>E</variation>
    <location>
        <position position="17"/>
    </location>
</feature>
<feature type="mutagenesis site" description="Strong decrease in MgsR stability. Strong decrease in activity." evidence="5">
    <original>R</original>
    <variation>E</variation>
    <location>
        <position position="33"/>
    </location>
</feature>
<feature type="mutagenesis site" description="Destabilizes MgsR approximately by half. Strong decrease in activity." evidence="5">
    <original>R</original>
    <variation>E</variation>
    <location>
        <position position="37"/>
    </location>
</feature>
<feature type="mutagenesis site" description="Destabilizes MgsR approximately by half. No change in activity." evidence="5">
    <original>R</original>
    <variation>E</variation>
    <location>
        <position position="42"/>
    </location>
</feature>
<feature type="mutagenesis site" description="Loss of activity. Strongly diminishes expression of mgsR and of the MgsR regulon." evidence="3 4">
    <original>G</original>
    <variation>R</variation>
    <location>
        <position position="55"/>
    </location>
</feature>
<feature type="mutagenesis site" description="Slight increase in MgsR stability. Strong decrease in activity." evidence="5">
    <original>R</original>
    <variation>E</variation>
    <location>
        <position position="63"/>
    </location>
</feature>
<feature type="mutagenesis site" description="Strong decrease in MgsR stability. Almost loss of activity." evidence="5">
    <original>RR</original>
    <variation>EE</variation>
    <location>
        <begin position="94"/>
        <end position="95"/>
    </location>
</feature>
<feature type="sequence conflict" description="In Ref. 1; BAA12529." evidence="7" ref="1">
    <original>M</original>
    <variation>I</variation>
    <location>
        <position position="77"/>
    </location>
</feature>
<comment type="function">
    <text evidence="3">Regulates transcription of a subregulon within the general stress response (PubMed:18643936). Exerts positive and negative effects in response to ethanol stress (PubMed:18643936).</text>
</comment>
<comment type="activity regulation">
    <text evidence="4 5">Activity is controlled at multiple levels (PubMed:22812682). Regulation includes a positive autoregulatory loop on mgsR transcription and a post-translational redox-sensitive activation step by an intramolecular disulfide bond formation in response to ethanol stress (PubMed:22812682). In addition, protein stability is strictly controlled by rapid proteolytic degradation by the ClpXP and ClpCP proteases (PubMed:22812682, PubMed:32477307). The McsB protein-arginine kinase might serve as a proteolytic adapter for the ClpX ATPase in the degradation mechanism of MgsR (PubMed:32477307).</text>
</comment>
<comment type="subcellular location">
    <subcellularLocation>
        <location evidence="7">Cytoplasm</location>
    </subcellularLocation>
</comment>
<comment type="induction">
    <text evidence="2 3 4">Expression is sigma B-dependent (PubMed:11544224, PubMed:18643936). Induced by ethanol, heat and salt stress (PubMed:11544224, PubMed:18643936). Positively autoregulated (PubMed:22812682).</text>
</comment>
<comment type="disruption phenotype">
    <text evidence="3">Deletion of the gene results in differential expression of approximately 70 genes in response to ethanol stress compared with the wild-type strain.</text>
</comment>
<comment type="similarity">
    <text evidence="7">Belongs to the ArsC family.</text>
</comment>
<sequence length="126" mass="14842">MEQQLTFYSYPSCTSCRKTKHWLKAHQIEFNERHLFRETPTREELKYILSLTTEGIDEILATRSQTFKNLNLNIEEMTVNEVLELLIEKPKLLRRPILVDNKKLVIGYNPGELLKLSKKKTVHQSA</sequence>
<dbReference type="EMBL" id="D84432">
    <property type="protein sequence ID" value="BAA12529.1"/>
    <property type="molecule type" value="Genomic_DNA"/>
</dbReference>
<dbReference type="EMBL" id="AL009126">
    <property type="protein sequence ID" value="CAB14408.2"/>
    <property type="molecule type" value="Genomic_DNA"/>
</dbReference>
<dbReference type="PIR" id="C69958">
    <property type="entry name" value="C69958"/>
</dbReference>
<dbReference type="RefSeq" id="NP_390357.2">
    <property type="nucleotide sequence ID" value="NC_000964.3"/>
</dbReference>
<dbReference type="RefSeq" id="WP_003230147.1">
    <property type="nucleotide sequence ID" value="NZ_OZ025638.1"/>
</dbReference>
<dbReference type="SMR" id="P54503"/>
<dbReference type="FunCoup" id="P54503">
    <property type="interactions" value="78"/>
</dbReference>
<dbReference type="STRING" id="224308.BSU24770"/>
<dbReference type="PaxDb" id="224308-BSU24770"/>
<dbReference type="EnsemblBacteria" id="CAB14408">
    <property type="protein sequence ID" value="CAB14408"/>
    <property type="gene ID" value="BSU_24770"/>
</dbReference>
<dbReference type="GeneID" id="938484"/>
<dbReference type="KEGG" id="bsu:BSU24770"/>
<dbReference type="PATRIC" id="fig|224308.179.peg.2696"/>
<dbReference type="eggNOG" id="COG1393">
    <property type="taxonomic scope" value="Bacteria"/>
</dbReference>
<dbReference type="InParanoid" id="P54503"/>
<dbReference type="OrthoDB" id="9794155at2"/>
<dbReference type="PhylomeDB" id="P54503"/>
<dbReference type="BioCyc" id="BSUB:BSU24770-MONOMER"/>
<dbReference type="Proteomes" id="UP000001570">
    <property type="component" value="Chromosome"/>
</dbReference>
<dbReference type="GO" id="GO:0005737">
    <property type="term" value="C:cytoplasm"/>
    <property type="evidence" value="ECO:0007669"/>
    <property type="project" value="UniProtKB-SubCell"/>
</dbReference>
<dbReference type="CDD" id="cd03032">
    <property type="entry name" value="ArsC_Spx"/>
    <property type="match status" value="1"/>
</dbReference>
<dbReference type="Gene3D" id="3.40.30.10">
    <property type="entry name" value="Glutaredoxin"/>
    <property type="match status" value="1"/>
</dbReference>
<dbReference type="InterPro" id="IPR006660">
    <property type="entry name" value="Arsenate_reductase-like"/>
</dbReference>
<dbReference type="InterPro" id="IPR036249">
    <property type="entry name" value="Thioredoxin-like_sf"/>
</dbReference>
<dbReference type="InterPro" id="IPR006504">
    <property type="entry name" value="Tscrpt_reg_Spx/MgsR"/>
</dbReference>
<dbReference type="NCBIfam" id="TIGR01617">
    <property type="entry name" value="arsC_related"/>
    <property type="match status" value="1"/>
</dbReference>
<dbReference type="NCBIfam" id="NF002459">
    <property type="entry name" value="PRK01655.1"/>
    <property type="match status" value="1"/>
</dbReference>
<dbReference type="PANTHER" id="PTHR30041">
    <property type="entry name" value="ARSENATE REDUCTASE"/>
    <property type="match status" value="1"/>
</dbReference>
<dbReference type="PANTHER" id="PTHR30041:SF7">
    <property type="entry name" value="GLOBAL TRANSCRIPTIONAL REGULATOR SPX"/>
    <property type="match status" value="1"/>
</dbReference>
<dbReference type="Pfam" id="PF03960">
    <property type="entry name" value="ArsC"/>
    <property type="match status" value="1"/>
</dbReference>
<dbReference type="SUPFAM" id="SSF52833">
    <property type="entry name" value="Thioredoxin-like"/>
    <property type="match status" value="1"/>
</dbReference>
<dbReference type="PROSITE" id="PS51353">
    <property type="entry name" value="ARSC"/>
    <property type="match status" value="1"/>
</dbReference>
<name>MGSR_BACSU</name>
<accession>P54503</accession>
<evidence type="ECO:0000255" key="1">
    <source>
        <dbReference type="PROSITE-ProRule" id="PRU01282"/>
    </source>
</evidence>
<evidence type="ECO:0000269" key="2">
    <source>
    </source>
</evidence>
<evidence type="ECO:0000269" key="3">
    <source>
    </source>
</evidence>
<evidence type="ECO:0000269" key="4">
    <source>
    </source>
</evidence>
<evidence type="ECO:0000269" key="5">
    <source>
    </source>
</evidence>
<evidence type="ECO:0000303" key="6">
    <source>
    </source>
</evidence>
<evidence type="ECO:0000305" key="7"/>
<keyword id="KW-0010">Activator</keyword>
<keyword id="KW-0963">Cytoplasm</keyword>
<keyword id="KW-1015">Disulfide bond</keyword>
<keyword id="KW-0676">Redox-active center</keyword>
<keyword id="KW-1185">Reference proteome</keyword>
<keyword id="KW-0678">Repressor</keyword>
<keyword id="KW-0346">Stress response</keyword>
<keyword id="KW-0804">Transcription</keyword>
<keyword id="KW-0805">Transcription regulation</keyword>
<organism>
    <name type="scientific">Bacillus subtilis (strain 168)</name>
    <dbReference type="NCBI Taxonomy" id="224308"/>
    <lineage>
        <taxon>Bacteria</taxon>
        <taxon>Bacillati</taxon>
        <taxon>Bacillota</taxon>
        <taxon>Bacilli</taxon>
        <taxon>Bacillales</taxon>
        <taxon>Bacillaceae</taxon>
        <taxon>Bacillus</taxon>
    </lineage>
</organism>
<proteinExistence type="evidence at protein level"/>
<gene>
    <name evidence="6" type="primary">mgsR</name>
    <name type="synonym">yqgZ</name>
    <name type="ordered locus">BSU24770</name>
</gene>